<keyword id="KW-0175">Coiled coil</keyword>
<keyword id="KW-0963">Cytoplasm</keyword>
<keyword id="KW-0903">Direct protein sequencing</keyword>
<keyword id="KW-0256">Endoplasmic reticulum</keyword>
<keyword id="KW-0325">Glycoprotein</keyword>
<keyword id="KW-0539">Nucleus</keyword>
<keyword id="KW-1065">Osteogenesis imperfecta</keyword>
<keyword id="KW-1267">Proteomics identification</keyword>
<keyword id="KW-1185">Reference proteome</keyword>
<keyword id="KW-0964">Secreted</keyword>
<keyword id="KW-0732">Signal</keyword>
<evidence type="ECO:0000255" key="1"/>
<evidence type="ECO:0000255" key="2">
    <source>
        <dbReference type="PROSITE-ProRule" id="PRU00768"/>
    </source>
</evidence>
<evidence type="ECO:0000256" key="3">
    <source>
        <dbReference type="SAM" id="MobiDB-lite"/>
    </source>
</evidence>
<evidence type="ECO:0000269" key="4">
    <source>
    </source>
</evidence>
<evidence type="ECO:0000269" key="5">
    <source>
    </source>
</evidence>
<evidence type="ECO:0000269" key="6">
    <source>
    </source>
</evidence>
<evidence type="ECO:0000269" key="7">
    <source>
    </source>
</evidence>
<evidence type="ECO:0000269" key="8">
    <source>
    </source>
</evidence>
<evidence type="ECO:0000269" key="9">
    <source>
    </source>
</evidence>
<evidence type="ECO:0000269" key="10">
    <source>
    </source>
</evidence>
<evidence type="ECO:0000269" key="11">
    <source>
    </source>
</evidence>
<evidence type="ECO:0000303" key="12">
    <source>
    </source>
</evidence>
<evidence type="ECO:0000305" key="13"/>
<evidence type="ECO:0000305" key="14">
    <source>
    </source>
</evidence>
<evidence type="ECO:0000312" key="15">
    <source>
        <dbReference type="HGNC" id="HGNC:26185"/>
    </source>
</evidence>
<feature type="signal peptide" evidence="4">
    <location>
        <begin position="1"/>
        <end position="22"/>
    </location>
</feature>
<feature type="chain" id="PRO_0000254109" description="Coiled-coil domain-containing protein 134">
    <location>
        <begin position="23"/>
        <end position="229"/>
    </location>
</feature>
<feature type="region of interest" description="Disordered" evidence="3">
    <location>
        <begin position="193"/>
        <end position="229"/>
    </location>
</feature>
<feature type="coiled-coil region" evidence="1">
    <location>
        <begin position="196"/>
        <end position="218"/>
    </location>
</feature>
<feature type="short sequence motif" description="Prevents secretion from ER" evidence="11">
    <location>
        <position position="148"/>
    </location>
</feature>
<feature type="short sequence motif" description="Nuclear localization signal" evidence="2 5">
    <location>
        <begin position="206"/>
        <end position="213"/>
    </location>
</feature>
<feature type="glycosylation site" description="N-linked (GlcNAc...) asparagine" evidence="10">
    <location>
        <position position="148"/>
    </location>
</feature>
<feature type="mutagenesis site" description="Abolished retention in the endoplasmic reticulum leading to secretion." evidence="11">
    <original>L</original>
    <variation>A</variation>
    <location>
        <position position="229"/>
    </location>
</feature>
<organism>
    <name type="scientific">Homo sapiens</name>
    <name type="common">Human</name>
    <dbReference type="NCBI Taxonomy" id="9606"/>
    <lineage>
        <taxon>Eukaryota</taxon>
        <taxon>Metazoa</taxon>
        <taxon>Chordata</taxon>
        <taxon>Craniata</taxon>
        <taxon>Vertebrata</taxon>
        <taxon>Euteleostomi</taxon>
        <taxon>Mammalia</taxon>
        <taxon>Eutheria</taxon>
        <taxon>Euarchontoglires</taxon>
        <taxon>Primates</taxon>
        <taxon>Haplorrhini</taxon>
        <taxon>Catarrhini</taxon>
        <taxon>Hominidae</taxon>
        <taxon>Homo</taxon>
    </lineage>
</organism>
<name>CC134_HUMAN</name>
<gene>
    <name evidence="12 15" type="primary">CCDC134</name>
</gene>
<comment type="function">
    <text evidence="4 5 6 7 8 10 11">Molecular adapter required to prevent protein hyperglycosylation of HSP90B1: during translation, associates with nascent HSP90B1 and the STT3A catalytic component of the OST-A complex and tethers them to a specialized translocon that forms a microenvironment for HSP90B1 folding (PubMed:38670073, PubMed:39509507). In the CCDC134-containing translocon, STT3A associates with the SRT pseudosubstrate motif of HSP90B1, preventing access to facultative glycosylation sites until folding is completed, preventing hyperglycosylation and subsequent degradation of HSP90B1 (PubMed:39509507). In extracellular secreted form, promotes proliferation and activation of CD8(+) T-cells, suggesting a cytokine-like function (PubMed:25125657). May inhibit ERK and JNK signaling activity (PubMed:18087676, PubMed:23070808). May suppress cell migration and invasion activity, via its effects on ERK and JNK signaling (PubMed:23070808). May also localize in the nucleus: enhances stability of the PCAF histone acetyltransferase (HAT) complex member TADA2A and thus promotes PCAF-mediated histone acetyltransferase activity (PubMed:22644376). Has a critical role in the regulation of osteogenesis and bone development (PubMed:32181939).</text>
</comment>
<comment type="subunit">
    <text evidence="5">Interacts with TADA2A (PubMed:22644376). Associates with the PCAF complex via TADA2A binding (PubMed:22644376).</text>
</comment>
<comment type="interaction">
    <interactant intactId="EBI-953766">
        <id>Q9H6E4</id>
    </interactant>
    <interactant intactId="EBI-1045534">
        <id>O00264</id>
        <label>PGRMC1</label>
    </interactant>
    <organismsDiffer>false</organismsDiffer>
    <experiments>3</experiments>
</comment>
<comment type="interaction">
    <interactant intactId="EBI-953766">
        <id>Q9H6E4</id>
    </interactant>
    <interactant intactId="EBI-10200782">
        <id>Q16849-3</id>
        <label>PTPRN</label>
    </interactant>
    <organismsDiffer>false</organismsDiffer>
    <experiments>3</experiments>
</comment>
<comment type="interaction">
    <interactant intactId="EBI-953766">
        <id>Q9H6E4</id>
    </interactant>
    <interactant intactId="EBI-742268">
        <id>O75478</id>
        <label>TADA2A</label>
    </interactant>
    <organismsDiffer>false</organismsDiffer>
    <experiments>6</experiments>
</comment>
<comment type="subcellular location">
    <subcellularLocation>
        <location evidence="11 14">Endoplasmic reticulum lumen</location>
    </subcellularLocation>
    <subcellularLocation>
        <location evidence="4">Secreted</location>
    </subcellularLocation>
    <subcellularLocation>
        <location evidence="5">Cytoplasm</location>
    </subcellularLocation>
    <subcellularLocation>
        <location evidence="5">Nucleus</location>
    </subcellularLocation>
    <text evidence="5 11">Mainly localizes to the endoplasmic reticulum (PubMed:39509507). Accumulates in the nucleus in response to UV irradiation (PubMed:22644376).</text>
</comment>
<comment type="tissue specificity">
    <text evidence="4 6 7">Expressed in cervical gland, cervical squamous epithelium, endometrium, stomach, kidney distal convoluted tubule, spermatogenic cells in testis, mammary gland, liver and striated muscle (at protein level) (PubMed:18087676, PubMed:23070808). Also detected in placenta (PubMed:18087676). Highest expression in testis relative to other tissues (PubMed:18087676). Detected in T cells and dendritic cells; highly expressed in activated CD8(+) T cells, and also expressed at lower levels in CD4(+) T cells (PubMed:25125657).</text>
</comment>
<comment type="PTM">
    <text evidence="4">O-glycosylated, with additional sialic acid modifications.</text>
</comment>
<comment type="disease" evidence="8 9">
    <disease id="DI-06367">
        <name>Osteogenesis imperfecta 22</name>
        <acronym>OI22</acronym>
        <description>An autosomal recessive form of osteogenesis imperfecta, a disorder of bone formation characterized by low bone mass, bone fragility and susceptibility to fractures after minimal trauma. Disease severity ranges from very mild forms without fractures to intrauterine fractures and perinatal lethality. Extraskeletal manifestations, which affect a variable number of patients, are dentinogenesis imperfecta, hearing loss, and blue sclerae. OI22 is a severe form of the disease.</description>
        <dbReference type="MIM" id="619795"/>
    </disease>
    <text evidence="8 9">The disease is caused by variants affecting the gene represented in this entry. A recurrent variant in the initiation codon has been found in multiple OI22 patients (PubMed:32181939, PubMed:35019224). The variant results in absence of CCDC134 protein in patient fibroblasts and osteoblasts, increased ERK1/2 phosphorylation, decreased OPN and COL1A1 expression and reduced mineralization (PubMed:32181939).</text>
</comment>
<comment type="similarity">
    <text evidence="13">Belongs to the CCDC134 family.</text>
</comment>
<protein>
    <recommendedName>
        <fullName evidence="13">Coiled-coil domain-containing protein 134</fullName>
    </recommendedName>
</protein>
<reference key="1">
    <citation type="journal article" date="2004" name="Genome Biol.">
        <title>A genome annotation-driven approach to cloning the human ORFeome.</title>
        <authorList>
            <person name="Collins J.E."/>
            <person name="Wright C.L."/>
            <person name="Edwards C.A."/>
            <person name="Davis M.P."/>
            <person name="Grinham J.A."/>
            <person name="Cole C.G."/>
            <person name="Goward M.E."/>
            <person name="Aguado B."/>
            <person name="Mallya M."/>
            <person name="Mokrab Y."/>
            <person name="Huckle E.J."/>
            <person name="Beare D.M."/>
            <person name="Dunham I."/>
        </authorList>
    </citation>
    <scope>NUCLEOTIDE SEQUENCE [LARGE SCALE MRNA]</scope>
</reference>
<reference key="2">
    <citation type="journal article" date="2004" name="Nat. Genet.">
        <title>Complete sequencing and characterization of 21,243 full-length human cDNAs.</title>
        <authorList>
            <person name="Ota T."/>
            <person name="Suzuki Y."/>
            <person name="Nishikawa T."/>
            <person name="Otsuki T."/>
            <person name="Sugiyama T."/>
            <person name="Irie R."/>
            <person name="Wakamatsu A."/>
            <person name="Hayashi K."/>
            <person name="Sato H."/>
            <person name="Nagai K."/>
            <person name="Kimura K."/>
            <person name="Makita H."/>
            <person name="Sekine M."/>
            <person name="Obayashi M."/>
            <person name="Nishi T."/>
            <person name="Shibahara T."/>
            <person name="Tanaka T."/>
            <person name="Ishii S."/>
            <person name="Yamamoto J."/>
            <person name="Saito K."/>
            <person name="Kawai Y."/>
            <person name="Isono Y."/>
            <person name="Nakamura Y."/>
            <person name="Nagahari K."/>
            <person name="Murakami K."/>
            <person name="Yasuda T."/>
            <person name="Iwayanagi T."/>
            <person name="Wagatsuma M."/>
            <person name="Shiratori A."/>
            <person name="Sudo H."/>
            <person name="Hosoiri T."/>
            <person name="Kaku Y."/>
            <person name="Kodaira H."/>
            <person name="Kondo H."/>
            <person name="Sugawara M."/>
            <person name="Takahashi M."/>
            <person name="Kanda K."/>
            <person name="Yokoi T."/>
            <person name="Furuya T."/>
            <person name="Kikkawa E."/>
            <person name="Omura Y."/>
            <person name="Abe K."/>
            <person name="Kamihara K."/>
            <person name="Katsuta N."/>
            <person name="Sato K."/>
            <person name="Tanikawa M."/>
            <person name="Yamazaki M."/>
            <person name="Ninomiya K."/>
            <person name="Ishibashi T."/>
            <person name="Yamashita H."/>
            <person name="Murakawa K."/>
            <person name="Fujimori K."/>
            <person name="Tanai H."/>
            <person name="Kimata M."/>
            <person name="Watanabe M."/>
            <person name="Hiraoka S."/>
            <person name="Chiba Y."/>
            <person name="Ishida S."/>
            <person name="Ono Y."/>
            <person name="Takiguchi S."/>
            <person name="Watanabe S."/>
            <person name="Yosida M."/>
            <person name="Hotuta T."/>
            <person name="Kusano J."/>
            <person name="Kanehori K."/>
            <person name="Takahashi-Fujii A."/>
            <person name="Hara H."/>
            <person name="Tanase T.-O."/>
            <person name="Nomura Y."/>
            <person name="Togiya S."/>
            <person name="Komai F."/>
            <person name="Hara R."/>
            <person name="Takeuchi K."/>
            <person name="Arita M."/>
            <person name="Imose N."/>
            <person name="Musashino K."/>
            <person name="Yuuki H."/>
            <person name="Oshima A."/>
            <person name="Sasaki N."/>
            <person name="Aotsuka S."/>
            <person name="Yoshikawa Y."/>
            <person name="Matsunawa H."/>
            <person name="Ichihara T."/>
            <person name="Shiohata N."/>
            <person name="Sano S."/>
            <person name="Moriya S."/>
            <person name="Momiyama H."/>
            <person name="Satoh N."/>
            <person name="Takami S."/>
            <person name="Terashima Y."/>
            <person name="Suzuki O."/>
            <person name="Nakagawa S."/>
            <person name="Senoh A."/>
            <person name="Mizoguchi H."/>
            <person name="Goto Y."/>
            <person name="Shimizu F."/>
            <person name="Wakebe H."/>
            <person name="Hishigaki H."/>
            <person name="Watanabe T."/>
            <person name="Sugiyama A."/>
            <person name="Takemoto M."/>
            <person name="Kawakami B."/>
            <person name="Yamazaki M."/>
            <person name="Watanabe K."/>
            <person name="Kumagai A."/>
            <person name="Itakura S."/>
            <person name="Fukuzumi Y."/>
            <person name="Fujimori Y."/>
            <person name="Komiyama M."/>
            <person name="Tashiro H."/>
            <person name="Tanigami A."/>
            <person name="Fujiwara T."/>
            <person name="Ono T."/>
            <person name="Yamada K."/>
            <person name="Fujii Y."/>
            <person name="Ozaki K."/>
            <person name="Hirao M."/>
            <person name="Ohmori Y."/>
            <person name="Kawabata A."/>
            <person name="Hikiji T."/>
            <person name="Kobatake N."/>
            <person name="Inagaki H."/>
            <person name="Ikema Y."/>
            <person name="Okamoto S."/>
            <person name="Okitani R."/>
            <person name="Kawakami T."/>
            <person name="Noguchi S."/>
            <person name="Itoh T."/>
            <person name="Shigeta K."/>
            <person name="Senba T."/>
            <person name="Matsumura K."/>
            <person name="Nakajima Y."/>
            <person name="Mizuno T."/>
            <person name="Morinaga M."/>
            <person name="Sasaki M."/>
            <person name="Togashi T."/>
            <person name="Oyama M."/>
            <person name="Hata H."/>
            <person name="Watanabe M."/>
            <person name="Komatsu T."/>
            <person name="Mizushima-Sugano J."/>
            <person name="Satoh T."/>
            <person name="Shirai Y."/>
            <person name="Takahashi Y."/>
            <person name="Nakagawa K."/>
            <person name="Okumura K."/>
            <person name="Nagase T."/>
            <person name="Nomura N."/>
            <person name="Kikuchi H."/>
            <person name="Masuho Y."/>
            <person name="Yamashita R."/>
            <person name="Nakai K."/>
            <person name="Yada T."/>
            <person name="Nakamura Y."/>
            <person name="Ohara O."/>
            <person name="Isogai T."/>
            <person name="Sugano S."/>
        </authorList>
    </citation>
    <scope>NUCLEOTIDE SEQUENCE [LARGE SCALE MRNA]</scope>
    <source>
        <tissue>Kidney epithelium</tissue>
    </source>
</reference>
<reference key="3">
    <citation type="journal article" date="1999" name="Nature">
        <title>The DNA sequence of human chromosome 22.</title>
        <authorList>
            <person name="Dunham I."/>
            <person name="Hunt A.R."/>
            <person name="Collins J.E."/>
            <person name="Bruskiewich R."/>
            <person name="Beare D.M."/>
            <person name="Clamp M."/>
            <person name="Smink L.J."/>
            <person name="Ainscough R."/>
            <person name="Almeida J.P."/>
            <person name="Babbage A.K."/>
            <person name="Bagguley C."/>
            <person name="Bailey J."/>
            <person name="Barlow K.F."/>
            <person name="Bates K.N."/>
            <person name="Beasley O.P."/>
            <person name="Bird C.P."/>
            <person name="Blakey S.E."/>
            <person name="Bridgeman A.M."/>
            <person name="Buck D."/>
            <person name="Burgess J."/>
            <person name="Burrill W.D."/>
            <person name="Burton J."/>
            <person name="Carder C."/>
            <person name="Carter N.P."/>
            <person name="Chen Y."/>
            <person name="Clark G."/>
            <person name="Clegg S.M."/>
            <person name="Cobley V.E."/>
            <person name="Cole C.G."/>
            <person name="Collier R.E."/>
            <person name="Connor R."/>
            <person name="Conroy D."/>
            <person name="Corby N.R."/>
            <person name="Coville G.J."/>
            <person name="Cox A.V."/>
            <person name="Davis J."/>
            <person name="Dawson E."/>
            <person name="Dhami P.D."/>
            <person name="Dockree C."/>
            <person name="Dodsworth S.J."/>
            <person name="Durbin R.M."/>
            <person name="Ellington A.G."/>
            <person name="Evans K.L."/>
            <person name="Fey J.M."/>
            <person name="Fleming K."/>
            <person name="French L."/>
            <person name="Garner A.A."/>
            <person name="Gilbert J.G.R."/>
            <person name="Goward M.E."/>
            <person name="Grafham D.V."/>
            <person name="Griffiths M.N.D."/>
            <person name="Hall C."/>
            <person name="Hall R.E."/>
            <person name="Hall-Tamlyn G."/>
            <person name="Heathcott R.W."/>
            <person name="Ho S."/>
            <person name="Holmes S."/>
            <person name="Hunt S.E."/>
            <person name="Jones M.C."/>
            <person name="Kershaw J."/>
            <person name="Kimberley A.M."/>
            <person name="King A."/>
            <person name="Laird G.K."/>
            <person name="Langford C.F."/>
            <person name="Leversha M.A."/>
            <person name="Lloyd C."/>
            <person name="Lloyd D.M."/>
            <person name="Martyn I.D."/>
            <person name="Mashreghi-Mohammadi M."/>
            <person name="Matthews L.H."/>
            <person name="Mccann O.T."/>
            <person name="Mcclay J."/>
            <person name="Mclaren S."/>
            <person name="McMurray A.A."/>
            <person name="Milne S.A."/>
            <person name="Mortimore B.J."/>
            <person name="Odell C.N."/>
            <person name="Pavitt R."/>
            <person name="Pearce A.V."/>
            <person name="Pearson D."/>
            <person name="Phillimore B.J.C.T."/>
            <person name="Phillips S.H."/>
            <person name="Plumb R.W."/>
            <person name="Ramsay H."/>
            <person name="Ramsey Y."/>
            <person name="Rogers L."/>
            <person name="Ross M.T."/>
            <person name="Scott C.E."/>
            <person name="Sehra H.K."/>
            <person name="Skuce C.D."/>
            <person name="Smalley S."/>
            <person name="Smith M.L."/>
            <person name="Soderlund C."/>
            <person name="Spragon L."/>
            <person name="Steward C.A."/>
            <person name="Sulston J.E."/>
            <person name="Swann R.M."/>
            <person name="Vaudin M."/>
            <person name="Wall M."/>
            <person name="Wallis J.M."/>
            <person name="Whiteley M.N."/>
            <person name="Willey D.L."/>
            <person name="Williams L."/>
            <person name="Williams S.A."/>
            <person name="Williamson H."/>
            <person name="Wilmer T.E."/>
            <person name="Wilming L."/>
            <person name="Wright C.L."/>
            <person name="Hubbard T."/>
            <person name="Bentley D.R."/>
            <person name="Beck S."/>
            <person name="Rogers J."/>
            <person name="Shimizu N."/>
            <person name="Minoshima S."/>
            <person name="Kawasaki K."/>
            <person name="Sasaki T."/>
            <person name="Asakawa S."/>
            <person name="Kudoh J."/>
            <person name="Shintani A."/>
            <person name="Shibuya K."/>
            <person name="Yoshizaki Y."/>
            <person name="Aoki N."/>
            <person name="Mitsuyama S."/>
            <person name="Roe B.A."/>
            <person name="Chen F."/>
            <person name="Chu L."/>
            <person name="Crabtree J."/>
            <person name="Deschamps S."/>
            <person name="Do A."/>
            <person name="Do T."/>
            <person name="Dorman A."/>
            <person name="Fang F."/>
            <person name="Fu Y."/>
            <person name="Hu P."/>
            <person name="Hua A."/>
            <person name="Kenton S."/>
            <person name="Lai H."/>
            <person name="Lao H.I."/>
            <person name="Lewis J."/>
            <person name="Lewis S."/>
            <person name="Lin S.-P."/>
            <person name="Loh P."/>
            <person name="Malaj E."/>
            <person name="Nguyen T."/>
            <person name="Pan H."/>
            <person name="Phan S."/>
            <person name="Qi S."/>
            <person name="Qian Y."/>
            <person name="Ray L."/>
            <person name="Ren Q."/>
            <person name="Shaull S."/>
            <person name="Sloan D."/>
            <person name="Song L."/>
            <person name="Wang Q."/>
            <person name="Wang Y."/>
            <person name="Wang Z."/>
            <person name="White J."/>
            <person name="Willingham D."/>
            <person name="Wu H."/>
            <person name="Yao Z."/>
            <person name="Zhan M."/>
            <person name="Zhang G."/>
            <person name="Chissoe S."/>
            <person name="Murray J."/>
            <person name="Miller N."/>
            <person name="Minx P."/>
            <person name="Fulton R."/>
            <person name="Johnson D."/>
            <person name="Bemis G."/>
            <person name="Bentley D."/>
            <person name="Bradshaw H."/>
            <person name="Bourne S."/>
            <person name="Cordes M."/>
            <person name="Du Z."/>
            <person name="Fulton L."/>
            <person name="Goela D."/>
            <person name="Graves T."/>
            <person name="Hawkins J."/>
            <person name="Hinds K."/>
            <person name="Kemp K."/>
            <person name="Latreille P."/>
            <person name="Layman D."/>
            <person name="Ozersky P."/>
            <person name="Rohlfing T."/>
            <person name="Scheet P."/>
            <person name="Walker C."/>
            <person name="Wamsley A."/>
            <person name="Wohldmann P."/>
            <person name="Pepin K."/>
            <person name="Nelson J."/>
            <person name="Korf I."/>
            <person name="Bedell J.A."/>
            <person name="Hillier L.W."/>
            <person name="Mardis E."/>
            <person name="Waterston R."/>
            <person name="Wilson R."/>
            <person name="Emanuel B.S."/>
            <person name="Shaikh T."/>
            <person name="Kurahashi H."/>
            <person name="Saitta S."/>
            <person name="Budarf M.L."/>
            <person name="McDermid H.E."/>
            <person name="Johnson A."/>
            <person name="Wong A.C.C."/>
            <person name="Morrow B.E."/>
            <person name="Edelmann L."/>
            <person name="Kim U.J."/>
            <person name="Shizuya H."/>
            <person name="Simon M.I."/>
            <person name="Dumanski J.P."/>
            <person name="Peyrard M."/>
            <person name="Kedra D."/>
            <person name="Seroussi E."/>
            <person name="Fransson I."/>
            <person name="Tapia I."/>
            <person name="Bruder C.E."/>
            <person name="O'Brien K.P."/>
            <person name="Wilkinson P."/>
            <person name="Bodenteich A."/>
            <person name="Hartman K."/>
            <person name="Hu X."/>
            <person name="Khan A.S."/>
            <person name="Lane L."/>
            <person name="Tilahun Y."/>
            <person name="Wright H."/>
        </authorList>
    </citation>
    <scope>NUCLEOTIDE SEQUENCE [LARGE SCALE GENOMIC DNA]</scope>
</reference>
<reference key="4">
    <citation type="journal article" date="2004" name="Genome Res.">
        <title>The status, quality, and expansion of the NIH full-length cDNA project: the Mammalian Gene Collection (MGC).</title>
        <authorList>
            <consortium name="The MGC Project Team"/>
        </authorList>
    </citation>
    <scope>NUCLEOTIDE SEQUENCE [LARGE SCALE MRNA]</scope>
    <source>
        <tissue>Mammary carcinoma</tissue>
    </source>
</reference>
<reference key="5">
    <citation type="journal article" date="2008" name="Cell. Mol. Life Sci.">
        <title>CCDC134, a novel secretory protein, inhibits activation of ERK and JNK, but not p38 MAPK.</title>
        <authorList>
            <person name="Huang J."/>
            <person name="Shi T."/>
            <person name="Ma T."/>
            <person name="Zhang Y."/>
            <person name="Ma X."/>
            <person name="Lu Y."/>
            <person name="Song Q."/>
            <person name="Liu W."/>
            <person name="Ma D."/>
            <person name="Qiu X."/>
        </authorList>
    </citation>
    <scope>PROTEIN SEQUENCE OF 23-27</scope>
    <scope>FUNCTION</scope>
    <scope>SUBCELLULAR LOCATION</scope>
    <scope>TISSUE SPECIFICITY</scope>
    <scope>GLYCOSYLATION</scope>
</reference>
<reference key="6">
    <citation type="journal article" date="2011" name="BMC Syst. Biol.">
        <title>Initial characterization of the human central proteome.</title>
        <authorList>
            <person name="Burkard T.R."/>
            <person name="Planyavsky M."/>
            <person name="Kaupe I."/>
            <person name="Breitwieser F.P."/>
            <person name="Buerckstuemmer T."/>
            <person name="Bennett K.L."/>
            <person name="Superti-Furga G."/>
            <person name="Colinge J."/>
        </authorList>
    </citation>
    <scope>IDENTIFICATION BY MASS SPECTROMETRY [LARGE SCALE ANALYSIS]</scope>
</reference>
<reference key="7">
    <citation type="journal article" date="2012" name="Histochem. Cell Biol.">
        <title>CCDC134 interacts with hADA2a and functions as a regulator of hADA2a in acetyltransferase activity, DNA damage-induced apoptosis and cell cycle arrest.</title>
        <authorList>
            <person name="Huang J."/>
            <person name="Zhang L."/>
            <person name="Liu W."/>
            <person name="Liao Q."/>
            <person name="Shi T."/>
            <person name="Xiao L."/>
            <person name="Hu F."/>
            <person name="Qiu X."/>
        </authorList>
    </citation>
    <scope>FUNCTION</scope>
    <scope>INTERACTION WITH TADA2A</scope>
    <scope>ASSOCIATION WITH THE PCAF COMPLEX</scope>
    <scope>SUBCELLULAR LOCATION</scope>
    <scope>MOTIF</scope>
</reference>
<reference key="8">
    <citation type="journal article" date="2013" name="Mol. Cell. Biochem.">
        <title>CCDC134 is down-regulated in gastric cancer and its silencing promotes cell migration and invasion of GES-1 and AGS cells via the MAPK pathway.</title>
        <authorList>
            <person name="Zhong J."/>
            <person name="Zhao M."/>
            <person name="Luo Q."/>
            <person name="Ma Y."/>
            <person name="Liu J."/>
            <person name="Wang J."/>
            <person name="Yang M."/>
            <person name="Yuan X."/>
            <person name="Sang J."/>
            <person name="Huang C."/>
        </authorList>
    </citation>
    <scope>FUNCTION</scope>
    <scope>TISSUE SPECIFICITY</scope>
</reference>
<reference key="9">
    <citation type="journal article" date="2014" name="Cancer Res.">
        <title>Cytokine-like molecule CCDC134 contributes to CD8(+) T-cell effector functions in cancer immunotherapy.</title>
        <authorList>
            <person name="Huang J."/>
            <person name="Xiao L."/>
            <person name="Gong X."/>
            <person name="Shao W."/>
            <person name="Yin Y."/>
            <person name="Liao Q."/>
            <person name="Meng Y."/>
            <person name="Zhang Y."/>
            <person name="Ma D."/>
            <person name="Qiu X."/>
        </authorList>
    </citation>
    <scope>FUNCTION</scope>
    <scope>TISSUE SPECIFICITY</scope>
</reference>
<reference key="10">
    <citation type="journal article" date="2015" name="Proteomics">
        <title>N-terminome analysis of the human mitochondrial proteome.</title>
        <authorList>
            <person name="Vaca Jacome A.S."/>
            <person name="Rabilloud T."/>
            <person name="Schaeffer-Reiss C."/>
            <person name="Rompais M."/>
            <person name="Ayoub D."/>
            <person name="Lane L."/>
            <person name="Bairoch A."/>
            <person name="Van Dorsselaer A."/>
            <person name="Carapito C."/>
        </authorList>
    </citation>
    <scope>IDENTIFICATION BY MASS SPECTROMETRY [LARGE SCALE ANALYSIS]</scope>
</reference>
<reference key="11">
    <citation type="journal article" date="2024" name="Cell">
        <title>Positive selection CRISPR screens reveal a druggable pocket in an oligosaccharyltransferase required for inflammatory signaling to NF-kappaB.</title>
        <authorList>
            <person name="Lampson B.L."/>
            <person name="Ramrez A.S."/>
            <person name="Baro M."/>
            <person name="He L."/>
            <person name="Hegde M."/>
            <person name="Koduri V."/>
            <person name="Pfaff J.L."/>
            <person name="Hanna R.E."/>
            <person name="Kowal J."/>
            <person name="Shirole N.H."/>
            <person name="He Y."/>
            <person name="Doench J.G."/>
            <person name="Contessa J.N."/>
            <person name="Locher K.P."/>
            <person name="Kaelin W.G."/>
        </authorList>
    </citation>
    <scope>FUNCTION</scope>
    <scope>GLYCOSYLATION AT ASN-148</scope>
</reference>
<reference key="12">
    <citation type="journal article" date="2024" name="Science">
        <title>Regulated N-glycosylation controls chaperone function and receptor trafficking.</title>
        <authorList>
            <person name="Ma M."/>
            <person name="Dubey R."/>
            <person name="Jen A."/>
            <person name="Pusapati G.V."/>
            <person name="Singal B."/>
            <person name="Shishkova E."/>
            <person name="Overmyer K.A."/>
            <person name="Cormier-Daire V."/>
            <person name="Fedry J."/>
            <person name="Aravind L."/>
            <person name="Coon J.J."/>
            <person name="Rohatgi R."/>
        </authorList>
    </citation>
    <scope>FUNCTION</scope>
    <scope>SUBCELLULAR LOCATION</scope>
    <scope>INTERACTION WITH STT3A AND HSP90B1</scope>
    <scope>MUTAGENESIS OF LEU-229</scope>
</reference>
<reference key="13">
    <citation type="journal article" date="2020" name="J. Bone Miner. Res.">
        <title>Homozygous loss-of-function mutations in CCDC134 are responsible for a severe form of osteogenesis imperfecta.</title>
        <authorList>
            <person name="Dubail J."/>
            <person name="Brunelle P."/>
            <person name="Baujat G."/>
            <person name="Huber C."/>
            <person name="Doyard M."/>
            <person name="Michot C."/>
            <person name="Chavassieux P."/>
            <person name="Khairouni A."/>
            <person name="Topouchian V."/>
            <person name="Monnot S."/>
            <person name="Koumakis E."/>
            <person name="Cormier-Daire V."/>
        </authorList>
    </citation>
    <scope>INVOLVEMENT IN OI22</scope>
    <scope>FUNCTION</scope>
</reference>
<reference key="14">
    <citation type="journal article" date="2022" name="Am. J. Med. Genet. A">
        <title>The recurrent homozygous translation start site variant in CCDC134 in an individual with severe osteogenesis imperfecta of non-Morrocan ancestry.</title>
        <authorList>
            <person name="Ali T.M."/>
            <person name="Linnenkamp B.D.W."/>
            <person name="Yamamoto G.L."/>
            <person name="Honjo R.S."/>
            <person name="Cabral de Menezes Filho H."/>
            <person name="Kim C.A."/>
            <person name="Bertola D.R."/>
        </authorList>
    </citation>
    <scope>INVOLVEMENT IN OI22</scope>
</reference>
<sequence length="229" mass="26561">MDLLQFLAFLFVLLLSGMGATGTLRTSLDPSLEIYKKMFEVKRREQLLALKNLAQLNDIHQQYKILDVMLKGLFKVLEDSRTVLTAADVLPDGPFPQDEKLKDAFSHVVENTAFFGDVVLRFPRIVHYYFDHNSNWNLLIRWGISFCNQTGVFNQGPHSPILSLMAQELGISEKDSNFQNPFKIDRTEFIPSTDPFQKALREEEKRRKKEEKRKEIRKGPRISRSQSEL</sequence>
<proteinExistence type="evidence at protein level"/>
<accession>Q9H6E4</accession>
<dbReference type="EMBL" id="CR456484">
    <property type="protein sequence ID" value="CAG30370.1"/>
    <property type="molecule type" value="mRNA"/>
</dbReference>
<dbReference type="EMBL" id="AK026002">
    <property type="protein sequence ID" value="BAB15315.1"/>
    <property type="molecule type" value="mRNA"/>
</dbReference>
<dbReference type="EMBL" id="AL021453">
    <property type="status" value="NOT_ANNOTATED_CDS"/>
    <property type="molecule type" value="Genomic_DNA"/>
</dbReference>
<dbReference type="EMBL" id="BC017693">
    <property type="protein sequence ID" value="AAH17693.1"/>
    <property type="molecule type" value="mRNA"/>
</dbReference>
<dbReference type="CCDS" id="CCDS33654.1"/>
<dbReference type="RefSeq" id="NP_001369275.1">
    <property type="nucleotide sequence ID" value="NM_001382346.1"/>
</dbReference>
<dbReference type="RefSeq" id="NP_079097.1">
    <property type="nucleotide sequence ID" value="NM_024821.5"/>
</dbReference>
<dbReference type="RefSeq" id="XP_005261805.1">
    <property type="nucleotide sequence ID" value="XM_005261748.3"/>
</dbReference>
<dbReference type="BioGRID" id="122966">
    <property type="interactions" value="37"/>
</dbReference>
<dbReference type="FunCoup" id="Q9H6E4">
    <property type="interactions" value="1361"/>
</dbReference>
<dbReference type="IntAct" id="Q9H6E4">
    <property type="interactions" value="7"/>
</dbReference>
<dbReference type="STRING" id="9606.ENSP00000255784"/>
<dbReference type="GlyGen" id="Q9H6E4">
    <property type="glycosylation" value="5 sites, 1 N-linked glycan (1 site), 2 O-linked glycans (4 sites)"/>
</dbReference>
<dbReference type="iPTMnet" id="Q9H6E4"/>
<dbReference type="PhosphoSitePlus" id="Q9H6E4"/>
<dbReference type="BioMuta" id="CCDC134"/>
<dbReference type="DMDM" id="74752694"/>
<dbReference type="jPOST" id="Q9H6E4"/>
<dbReference type="MassIVE" id="Q9H6E4"/>
<dbReference type="PaxDb" id="9606-ENSP00000255784"/>
<dbReference type="PeptideAtlas" id="Q9H6E4"/>
<dbReference type="ProteomicsDB" id="80982"/>
<dbReference type="Pumba" id="Q9H6E4"/>
<dbReference type="Antibodypedia" id="289">
    <property type="antibodies" value="223 antibodies from 30 providers"/>
</dbReference>
<dbReference type="DNASU" id="79879"/>
<dbReference type="Ensembl" id="ENST00000255784.6">
    <property type="protein sequence ID" value="ENSP00000255784.5"/>
    <property type="gene ID" value="ENSG00000100147.14"/>
</dbReference>
<dbReference type="GeneID" id="79879"/>
<dbReference type="KEGG" id="hsa:79879"/>
<dbReference type="MANE-Select" id="ENST00000255784.6">
    <property type="protein sequence ID" value="ENSP00000255784.5"/>
    <property type="RefSeq nucleotide sequence ID" value="NM_024821.5"/>
    <property type="RefSeq protein sequence ID" value="NP_079097.1"/>
</dbReference>
<dbReference type="UCSC" id="uc003bbh.2">
    <property type="organism name" value="human"/>
</dbReference>
<dbReference type="AGR" id="HGNC:26185"/>
<dbReference type="CTD" id="79879"/>
<dbReference type="DisGeNET" id="79879"/>
<dbReference type="GeneCards" id="CCDC134"/>
<dbReference type="HGNC" id="HGNC:26185">
    <property type="gene designation" value="CCDC134"/>
</dbReference>
<dbReference type="HPA" id="ENSG00000100147">
    <property type="expression patterns" value="Low tissue specificity"/>
</dbReference>
<dbReference type="MalaCards" id="CCDC134"/>
<dbReference type="MIM" id="618788">
    <property type="type" value="gene"/>
</dbReference>
<dbReference type="MIM" id="619795">
    <property type="type" value="phenotype"/>
</dbReference>
<dbReference type="neXtProt" id="NX_Q9H6E4"/>
<dbReference type="OpenTargets" id="ENSG00000100147"/>
<dbReference type="PharmGKB" id="PA162381361"/>
<dbReference type="VEuPathDB" id="HostDB:ENSG00000100147"/>
<dbReference type="eggNOG" id="ENOG502QVE7">
    <property type="taxonomic scope" value="Eukaryota"/>
</dbReference>
<dbReference type="GeneTree" id="ENSGT00390000020164"/>
<dbReference type="HOGENOM" id="CLU_099195_0_0_1"/>
<dbReference type="InParanoid" id="Q9H6E4"/>
<dbReference type="OMA" id="GIGFCNQ"/>
<dbReference type="OrthoDB" id="5854099at2759"/>
<dbReference type="PAN-GO" id="Q9H6E4">
    <property type="GO annotations" value="0 GO annotations based on evolutionary models"/>
</dbReference>
<dbReference type="PhylomeDB" id="Q9H6E4"/>
<dbReference type="TreeFam" id="TF323839"/>
<dbReference type="PathwayCommons" id="Q9H6E4"/>
<dbReference type="SignaLink" id="Q9H6E4"/>
<dbReference type="BioGRID-ORCS" id="79879">
    <property type="hits" value="23 hits in 1161 CRISPR screens"/>
</dbReference>
<dbReference type="ChiTaRS" id="CCDC134">
    <property type="organism name" value="human"/>
</dbReference>
<dbReference type="GenomeRNAi" id="79879"/>
<dbReference type="Pharos" id="Q9H6E4">
    <property type="development level" value="Tbio"/>
</dbReference>
<dbReference type="PRO" id="PR:Q9H6E4"/>
<dbReference type="Proteomes" id="UP000005640">
    <property type="component" value="Chromosome 22"/>
</dbReference>
<dbReference type="RNAct" id="Q9H6E4">
    <property type="molecule type" value="protein"/>
</dbReference>
<dbReference type="Bgee" id="ENSG00000100147">
    <property type="expression patterns" value="Expressed in adrenal tissue and 128 other cell types or tissues"/>
</dbReference>
<dbReference type="ExpressionAtlas" id="Q9H6E4">
    <property type="expression patterns" value="baseline and differential"/>
</dbReference>
<dbReference type="GO" id="GO:0005829">
    <property type="term" value="C:cytosol"/>
    <property type="evidence" value="ECO:0000314"/>
    <property type="project" value="HPA"/>
</dbReference>
<dbReference type="GO" id="GO:0005788">
    <property type="term" value="C:endoplasmic reticulum lumen"/>
    <property type="evidence" value="ECO:0000314"/>
    <property type="project" value="UniProtKB"/>
</dbReference>
<dbReference type="GO" id="GO:0005576">
    <property type="term" value="C:extracellular region"/>
    <property type="evidence" value="ECO:0007669"/>
    <property type="project" value="UniProtKB-SubCell"/>
</dbReference>
<dbReference type="GO" id="GO:0043231">
    <property type="term" value="C:intracellular membrane-bounded organelle"/>
    <property type="evidence" value="ECO:0000314"/>
    <property type="project" value="HPA"/>
</dbReference>
<dbReference type="GO" id="GO:0016020">
    <property type="term" value="C:membrane"/>
    <property type="evidence" value="ECO:0007005"/>
    <property type="project" value="UniProtKB"/>
</dbReference>
<dbReference type="GO" id="GO:0005634">
    <property type="term" value="C:nucleus"/>
    <property type="evidence" value="ECO:0007669"/>
    <property type="project" value="UniProtKB-SubCell"/>
</dbReference>
<dbReference type="GO" id="GO:0030674">
    <property type="term" value="F:protein-macromolecule adaptor activity"/>
    <property type="evidence" value="ECO:0000314"/>
    <property type="project" value="UniProtKB"/>
</dbReference>
<dbReference type="GO" id="GO:0001525">
    <property type="term" value="P:angiogenesis"/>
    <property type="evidence" value="ECO:0007669"/>
    <property type="project" value="Ensembl"/>
</dbReference>
<dbReference type="GO" id="GO:0035162">
    <property type="term" value="P:embryonic hemopoiesis"/>
    <property type="evidence" value="ECO:0007669"/>
    <property type="project" value="Ensembl"/>
</dbReference>
<dbReference type="GO" id="GO:1990402">
    <property type="term" value="P:embryonic liver development"/>
    <property type="evidence" value="ECO:0007669"/>
    <property type="project" value="Ensembl"/>
</dbReference>
<dbReference type="GO" id="GO:0001890">
    <property type="term" value="P:placenta development"/>
    <property type="evidence" value="ECO:0007669"/>
    <property type="project" value="Ensembl"/>
</dbReference>
<dbReference type="GO" id="GO:0034126">
    <property type="term" value="P:positive regulation of MyD88-dependent toll-like receptor signaling pathway"/>
    <property type="evidence" value="ECO:0000314"/>
    <property type="project" value="UniProtKB"/>
</dbReference>
<dbReference type="GO" id="GO:0030177">
    <property type="term" value="P:positive regulation of Wnt signaling pathway"/>
    <property type="evidence" value="ECO:0000314"/>
    <property type="project" value="UniProtKB"/>
</dbReference>
<dbReference type="GO" id="GO:0030278">
    <property type="term" value="P:regulation of ossification"/>
    <property type="evidence" value="ECO:0000315"/>
    <property type="project" value="UniProtKB"/>
</dbReference>
<dbReference type="GO" id="GO:0060049">
    <property type="term" value="P:regulation of protein glycosylation"/>
    <property type="evidence" value="ECO:0000314"/>
    <property type="project" value="UniProtKB"/>
</dbReference>
<dbReference type="GO" id="GO:0021591">
    <property type="term" value="P:ventricular system development"/>
    <property type="evidence" value="ECO:0007669"/>
    <property type="project" value="Ensembl"/>
</dbReference>
<dbReference type="InterPro" id="IPR026321">
    <property type="entry name" value="Coiled-coil_dom_con_pro_134"/>
</dbReference>
<dbReference type="PANTHER" id="PTHR14735">
    <property type="entry name" value="COILED-COIL DOMAIN-CONTAINING PROTEIN 134"/>
    <property type="match status" value="1"/>
</dbReference>
<dbReference type="PANTHER" id="PTHR14735:SF1">
    <property type="entry name" value="COILED-COIL DOMAIN-CONTAINING PROTEIN 134"/>
    <property type="match status" value="1"/>
</dbReference>
<dbReference type="Pfam" id="PF15002">
    <property type="entry name" value="ERK-JNK_inhib"/>
    <property type="match status" value="1"/>
</dbReference>